<accession>Q7NMI9</accession>
<organism>
    <name type="scientific">Gloeobacter violaceus (strain ATCC 29082 / PCC 7421)</name>
    <dbReference type="NCBI Taxonomy" id="251221"/>
    <lineage>
        <taxon>Bacteria</taxon>
        <taxon>Bacillati</taxon>
        <taxon>Cyanobacteriota</taxon>
        <taxon>Cyanophyceae</taxon>
        <taxon>Gloeobacterales</taxon>
        <taxon>Gloeobacteraceae</taxon>
        <taxon>Gloeobacter</taxon>
    </lineage>
</organism>
<evidence type="ECO:0000255" key="1">
    <source>
        <dbReference type="HAMAP-Rule" id="MF_01612"/>
    </source>
</evidence>
<evidence type="ECO:0000255" key="2">
    <source>
        <dbReference type="PROSITE-ProRule" id="PRU01266"/>
    </source>
</evidence>
<evidence type="ECO:0000305" key="3"/>
<proteinExistence type="inferred from homology"/>
<comment type="function">
    <text evidence="1">Catalyzes the radical-mediated synthesis of 5-amino-5-(4-hydroxybenzyl)-6-(D-ribitylimino)-5,6-dihydrouracil from 5-amino-6-(D-ribitylamino)uracil and L-tyrosine.</text>
</comment>
<comment type="catalytic activity">
    <reaction evidence="1">
        <text>5-amino-6-(D-ribitylamino)uracil + L-tyrosine + S-adenosyl-L-methionine = 5-amino-5-(4-hydroxybenzyl)-6-(D-ribitylimino)-5,6-dihydrouracil + 2-iminoacetate + 5'-deoxyadenosine + L-methionine + H(+)</text>
        <dbReference type="Rhea" id="RHEA:55200"/>
        <dbReference type="ChEBI" id="CHEBI:15378"/>
        <dbReference type="ChEBI" id="CHEBI:15934"/>
        <dbReference type="ChEBI" id="CHEBI:17319"/>
        <dbReference type="ChEBI" id="CHEBI:57844"/>
        <dbReference type="ChEBI" id="CHEBI:58315"/>
        <dbReference type="ChEBI" id="CHEBI:59789"/>
        <dbReference type="ChEBI" id="CHEBI:77846"/>
        <dbReference type="ChEBI" id="CHEBI:85936"/>
        <dbReference type="EC" id="2.5.1.147"/>
    </reaction>
</comment>
<comment type="cofactor">
    <cofactor evidence="1">
        <name>[4Fe-4S] cluster</name>
        <dbReference type="ChEBI" id="CHEBI:49883"/>
    </cofactor>
    <text evidence="1">Binds 1 [4Fe-4S] cluster. The cluster is coordinated with 3 cysteines and an exchangeable S-adenosyl-L-methionine.</text>
</comment>
<comment type="pathway">
    <text evidence="1">Cofactor biosynthesis; coenzyme F0 biosynthesis.</text>
</comment>
<comment type="subunit">
    <text evidence="1">Consists of two subunits, CofG and CofH.</text>
</comment>
<comment type="similarity">
    <text evidence="1">Belongs to the radical SAM superfamily. CofH family.</text>
</comment>
<comment type="sequence caution" evidence="3">
    <conflict type="erroneous initiation">
        <sequence resource="EMBL-CDS" id="BAC88717"/>
    </conflict>
</comment>
<name>COFH_GLOVI</name>
<gene>
    <name evidence="1" type="primary">cofH</name>
    <name type="ordered locus">glr0776</name>
</gene>
<protein>
    <recommendedName>
        <fullName evidence="1">5-amino-6-(D-ribitylamino)uracil--L-tyrosine 4-hydroxyphenyl transferase</fullName>
        <ecNumber evidence="1">2.5.1.147</ecNumber>
    </recommendedName>
    <alternativeName>
        <fullName evidence="1">FO synthase subunit 2</fullName>
    </alternativeName>
</protein>
<feature type="chain" id="PRO_0000141709" description="5-amino-6-(D-ribitylamino)uracil--L-tyrosine 4-hydroxyphenyl transferase">
    <location>
        <begin position="1"/>
        <end position="389"/>
    </location>
</feature>
<feature type="domain" description="Radical SAM core" evidence="2">
    <location>
        <begin position="56"/>
        <end position="298"/>
    </location>
</feature>
<feature type="binding site" evidence="1">
    <location>
        <position position="70"/>
    </location>
    <ligand>
        <name>[4Fe-4S] cluster</name>
        <dbReference type="ChEBI" id="CHEBI:49883"/>
        <note>4Fe-4S-S-AdoMet</note>
    </ligand>
</feature>
<feature type="binding site" evidence="1">
    <location>
        <position position="74"/>
    </location>
    <ligand>
        <name>[4Fe-4S] cluster</name>
        <dbReference type="ChEBI" id="CHEBI:49883"/>
        <note>4Fe-4S-S-AdoMet</note>
    </ligand>
</feature>
<feature type="binding site" evidence="1">
    <location>
        <position position="77"/>
    </location>
    <ligand>
        <name>[4Fe-4S] cluster</name>
        <dbReference type="ChEBI" id="CHEBI:49883"/>
        <note>4Fe-4S-S-AdoMet</note>
    </ligand>
</feature>
<dbReference type="EC" id="2.5.1.147" evidence="1"/>
<dbReference type="EMBL" id="BA000045">
    <property type="protein sequence ID" value="BAC88717.1"/>
    <property type="status" value="ALT_INIT"/>
    <property type="molecule type" value="Genomic_DNA"/>
</dbReference>
<dbReference type="RefSeq" id="NP_923722.2">
    <property type="nucleotide sequence ID" value="NC_005125.1"/>
</dbReference>
<dbReference type="RefSeq" id="WP_011140778.1">
    <property type="nucleotide sequence ID" value="NC_005125.1"/>
</dbReference>
<dbReference type="SMR" id="Q7NMI9"/>
<dbReference type="STRING" id="251221.gene:10758253"/>
<dbReference type="EnsemblBacteria" id="BAC88717">
    <property type="protein sequence ID" value="BAC88717"/>
    <property type="gene ID" value="BAC88717"/>
</dbReference>
<dbReference type="KEGG" id="gvi:glr0776"/>
<dbReference type="PATRIC" id="fig|251221.4.peg.792"/>
<dbReference type="eggNOG" id="COG1060">
    <property type="taxonomic scope" value="Bacteria"/>
</dbReference>
<dbReference type="HOGENOM" id="CLU_040406_1_1_3"/>
<dbReference type="InParanoid" id="Q7NMI9"/>
<dbReference type="OrthoDB" id="9802027at2"/>
<dbReference type="PhylomeDB" id="Q7NMI9"/>
<dbReference type="UniPathway" id="UPA00072"/>
<dbReference type="Proteomes" id="UP000000557">
    <property type="component" value="Chromosome"/>
</dbReference>
<dbReference type="GO" id="GO:0051539">
    <property type="term" value="F:4 iron, 4 sulfur cluster binding"/>
    <property type="evidence" value="ECO:0007669"/>
    <property type="project" value="UniProtKB-KW"/>
</dbReference>
<dbReference type="GO" id="GO:0141093">
    <property type="term" value="F:5-amino-6-(D-ribitylamino)uracil--L-tyrosine 4-hydroxyphenyl transferase activity"/>
    <property type="evidence" value="ECO:0007669"/>
    <property type="project" value="UniProtKB-EC"/>
</dbReference>
<dbReference type="GO" id="GO:0044689">
    <property type="term" value="F:7,8-didemethyl-8-hydroxy-5-deazariboflavin synthase activity"/>
    <property type="evidence" value="ECO:0000318"/>
    <property type="project" value="GO_Central"/>
</dbReference>
<dbReference type="GO" id="GO:0005506">
    <property type="term" value="F:iron ion binding"/>
    <property type="evidence" value="ECO:0007669"/>
    <property type="project" value="UniProtKB-UniRule"/>
</dbReference>
<dbReference type="CDD" id="cd01335">
    <property type="entry name" value="Radical_SAM"/>
    <property type="match status" value="1"/>
</dbReference>
<dbReference type="Gene3D" id="3.20.20.70">
    <property type="entry name" value="Aldolase class I"/>
    <property type="match status" value="1"/>
</dbReference>
<dbReference type="HAMAP" id="MF_01612">
    <property type="entry name" value="FO_synth_sub2"/>
    <property type="match status" value="1"/>
</dbReference>
<dbReference type="InterPro" id="IPR013785">
    <property type="entry name" value="Aldolase_TIM"/>
</dbReference>
<dbReference type="InterPro" id="IPR045567">
    <property type="entry name" value="CofH/MnqC-like_C"/>
</dbReference>
<dbReference type="InterPro" id="IPR019940">
    <property type="entry name" value="CofH_family"/>
</dbReference>
<dbReference type="InterPro" id="IPR034405">
    <property type="entry name" value="F420"/>
</dbReference>
<dbReference type="InterPro" id="IPR020050">
    <property type="entry name" value="FO_synthase_su2"/>
</dbReference>
<dbReference type="InterPro" id="IPR007197">
    <property type="entry name" value="rSAM"/>
</dbReference>
<dbReference type="NCBIfam" id="TIGR00423">
    <property type="entry name" value="CofH family radical SAM protein"/>
    <property type="match status" value="1"/>
</dbReference>
<dbReference type="NCBIfam" id="TIGR03551">
    <property type="entry name" value="F420_cofH"/>
    <property type="match status" value="1"/>
</dbReference>
<dbReference type="NCBIfam" id="NF005609">
    <property type="entry name" value="PRK07360.1"/>
    <property type="match status" value="1"/>
</dbReference>
<dbReference type="PANTHER" id="PTHR43076">
    <property type="entry name" value="FO SYNTHASE (COFH)"/>
    <property type="match status" value="1"/>
</dbReference>
<dbReference type="PANTHER" id="PTHR43076:SF1">
    <property type="entry name" value="LIPOYL SYNTHASE 2"/>
    <property type="match status" value="1"/>
</dbReference>
<dbReference type="Pfam" id="PF19288">
    <property type="entry name" value="CofH_C"/>
    <property type="match status" value="1"/>
</dbReference>
<dbReference type="Pfam" id="PF04055">
    <property type="entry name" value="Radical_SAM"/>
    <property type="match status" value="1"/>
</dbReference>
<dbReference type="PIRSF" id="PIRSF004762">
    <property type="entry name" value="CHP00423"/>
    <property type="match status" value="1"/>
</dbReference>
<dbReference type="SFLD" id="SFLDF00293">
    <property type="entry name" value="((2_3_4_5-tetrahydroxypentyl)a"/>
    <property type="match status" value="1"/>
</dbReference>
<dbReference type="SFLD" id="SFLDG01064">
    <property type="entry name" value="F420__menaquinone_cofactor_bio"/>
    <property type="match status" value="1"/>
</dbReference>
<dbReference type="SFLD" id="SFLDG01389">
    <property type="entry name" value="menaquinone_synthsis_involved"/>
    <property type="match status" value="1"/>
</dbReference>
<dbReference type="SUPFAM" id="SSF102114">
    <property type="entry name" value="Radical SAM enzymes"/>
    <property type="match status" value="1"/>
</dbReference>
<dbReference type="PROSITE" id="PS51918">
    <property type="entry name" value="RADICAL_SAM"/>
    <property type="match status" value="1"/>
</dbReference>
<keyword id="KW-0004">4Fe-4S</keyword>
<keyword id="KW-0408">Iron</keyword>
<keyword id="KW-0411">Iron-sulfur</keyword>
<keyword id="KW-0479">Metal-binding</keyword>
<keyword id="KW-1185">Reference proteome</keyword>
<keyword id="KW-0949">S-adenosyl-L-methionine</keyword>
<keyword id="KW-0808">Transferase</keyword>
<sequence>MRDWKRLHATLDAAREGREMTVPEAAFLLGQTDPAARELVRSAADRLRAELVGERVSYVINRNINFSNICVQHCSFCAFRRDAQEAGAYSLDFAHILQKTAEAVASGATEICMQGGLNPAVRGAGGRVLDYYLQLVDAIKAPFPRIHLHAFSPQESFFIAREDRLPIETVLAELRAAGVDSMPGTAAEVLHEPVRRRLCPEKLSTLAWVRTVEAAHRTGLPMTSTMLSGHIETAMHRAIHLGVLRTIQKRTGGFTEFVLLPYVGLAAPRALRARVGRDQPELADALLTQAVARLFFGRSLVNHQPSWVKLGLEGAGEALRWGCNDIGGTLMEEHITSMAGARGGTCQTPEALRAAVFQAERTAYQRDTLYQEVAAESIQPAASLKSAAR</sequence>
<reference key="1">
    <citation type="journal article" date="2003" name="DNA Res.">
        <title>Complete genome structure of Gloeobacter violaceus PCC 7421, a cyanobacterium that lacks thylakoids.</title>
        <authorList>
            <person name="Nakamura Y."/>
            <person name="Kaneko T."/>
            <person name="Sato S."/>
            <person name="Mimuro M."/>
            <person name="Miyashita H."/>
            <person name="Tsuchiya T."/>
            <person name="Sasamoto S."/>
            <person name="Watanabe A."/>
            <person name="Kawashima K."/>
            <person name="Kishida Y."/>
            <person name="Kiyokawa C."/>
            <person name="Kohara M."/>
            <person name="Matsumoto M."/>
            <person name="Matsuno A."/>
            <person name="Nakazaki N."/>
            <person name="Shimpo S."/>
            <person name="Takeuchi C."/>
            <person name="Yamada M."/>
            <person name="Tabata S."/>
        </authorList>
    </citation>
    <scope>NUCLEOTIDE SEQUENCE [LARGE SCALE GENOMIC DNA]</scope>
    <source>
        <strain>ATCC 29082 / PCC 7421</strain>
    </source>
</reference>